<protein>
    <recommendedName>
        <fullName evidence="1">Probable septum site-determining protein MinC</fullName>
    </recommendedName>
</protein>
<comment type="function">
    <text evidence="1">Cell division inhibitor that blocks the formation of polar Z ring septums. Rapidly oscillates between the poles of the cell to destabilize FtsZ filaments that have formed before they mature into polar Z rings. Prevents FtsZ polymerization.</text>
</comment>
<comment type="subunit">
    <text evidence="1">Interacts with MinD and FtsZ.</text>
</comment>
<comment type="similarity">
    <text evidence="1">Belongs to the MinC family.</text>
</comment>
<gene>
    <name evidence="1" type="primary">minC</name>
    <name type="ordered locus">Sbal223_2424</name>
</gene>
<sequence length="221" mass="23120">MSKPSLELKGASFTLSVLHINSSDLQAVMTELDSKLAQAPQFFLGAPLVVNLSAIQHDSLNLSALKDLLISRQLVIVGITGATTVLSKQAKDLGLAIVKAGKQSSTPPPAPRQTKIVKQNIRSGQQVYAKNGDLIIFGAVGNGAEVIADGSIHIYGALRGKAMAGAAGDTSAVIIAHSLEAELVSIAGQYWLAENLQQHSSDKSGCIRLDGESLMVESLPL</sequence>
<accession>B8E7G0</accession>
<feature type="chain" id="PRO_1000191256" description="Probable septum site-determining protein MinC">
    <location>
        <begin position="1"/>
        <end position="221"/>
    </location>
</feature>
<evidence type="ECO:0000255" key="1">
    <source>
        <dbReference type="HAMAP-Rule" id="MF_00267"/>
    </source>
</evidence>
<proteinExistence type="inferred from homology"/>
<dbReference type="EMBL" id="CP001252">
    <property type="protein sequence ID" value="ACK46919.1"/>
    <property type="molecule type" value="Genomic_DNA"/>
</dbReference>
<dbReference type="RefSeq" id="WP_006081363.1">
    <property type="nucleotide sequence ID" value="NC_011663.1"/>
</dbReference>
<dbReference type="SMR" id="B8E7G0"/>
<dbReference type="GeneID" id="11772108"/>
<dbReference type="KEGG" id="sbp:Sbal223_2424"/>
<dbReference type="HOGENOM" id="CLU_067812_0_1_6"/>
<dbReference type="Proteomes" id="UP000002507">
    <property type="component" value="Chromosome"/>
</dbReference>
<dbReference type="GO" id="GO:0000902">
    <property type="term" value="P:cell morphogenesis"/>
    <property type="evidence" value="ECO:0007669"/>
    <property type="project" value="InterPro"/>
</dbReference>
<dbReference type="GO" id="GO:0000917">
    <property type="term" value="P:division septum assembly"/>
    <property type="evidence" value="ECO:0007669"/>
    <property type="project" value="UniProtKB-KW"/>
</dbReference>
<dbReference type="GO" id="GO:0051302">
    <property type="term" value="P:regulation of cell division"/>
    <property type="evidence" value="ECO:0007669"/>
    <property type="project" value="InterPro"/>
</dbReference>
<dbReference type="GO" id="GO:1901891">
    <property type="term" value="P:regulation of cell septum assembly"/>
    <property type="evidence" value="ECO:0007669"/>
    <property type="project" value="InterPro"/>
</dbReference>
<dbReference type="Gene3D" id="2.160.20.70">
    <property type="match status" value="1"/>
</dbReference>
<dbReference type="Gene3D" id="3.30.70.260">
    <property type="match status" value="1"/>
</dbReference>
<dbReference type="HAMAP" id="MF_00267">
    <property type="entry name" value="MinC"/>
    <property type="match status" value="1"/>
</dbReference>
<dbReference type="InterPro" id="IPR016098">
    <property type="entry name" value="CAP/MinC_C"/>
</dbReference>
<dbReference type="InterPro" id="IPR013033">
    <property type="entry name" value="MinC"/>
</dbReference>
<dbReference type="InterPro" id="IPR036145">
    <property type="entry name" value="MinC_C_sf"/>
</dbReference>
<dbReference type="InterPro" id="IPR007874">
    <property type="entry name" value="MinC_N"/>
</dbReference>
<dbReference type="InterPro" id="IPR005526">
    <property type="entry name" value="Septum_form_inhib_MinC_C"/>
</dbReference>
<dbReference type="NCBIfam" id="TIGR01222">
    <property type="entry name" value="minC"/>
    <property type="match status" value="1"/>
</dbReference>
<dbReference type="PANTHER" id="PTHR34108">
    <property type="entry name" value="SEPTUM SITE-DETERMINING PROTEIN MINC"/>
    <property type="match status" value="1"/>
</dbReference>
<dbReference type="PANTHER" id="PTHR34108:SF1">
    <property type="entry name" value="SEPTUM SITE-DETERMINING PROTEIN MINC"/>
    <property type="match status" value="1"/>
</dbReference>
<dbReference type="Pfam" id="PF03775">
    <property type="entry name" value="MinC_C"/>
    <property type="match status" value="1"/>
</dbReference>
<dbReference type="Pfam" id="PF05209">
    <property type="entry name" value="MinC_N"/>
    <property type="match status" value="1"/>
</dbReference>
<dbReference type="SUPFAM" id="SSF63848">
    <property type="entry name" value="Cell-division inhibitor MinC, C-terminal domain"/>
    <property type="match status" value="1"/>
</dbReference>
<keyword id="KW-0131">Cell cycle</keyword>
<keyword id="KW-0132">Cell division</keyword>
<keyword id="KW-0717">Septation</keyword>
<organism>
    <name type="scientific">Shewanella baltica (strain OS223)</name>
    <dbReference type="NCBI Taxonomy" id="407976"/>
    <lineage>
        <taxon>Bacteria</taxon>
        <taxon>Pseudomonadati</taxon>
        <taxon>Pseudomonadota</taxon>
        <taxon>Gammaproteobacteria</taxon>
        <taxon>Alteromonadales</taxon>
        <taxon>Shewanellaceae</taxon>
        <taxon>Shewanella</taxon>
    </lineage>
</organism>
<name>MINC_SHEB2</name>
<reference key="1">
    <citation type="submission" date="2008-12" db="EMBL/GenBank/DDBJ databases">
        <title>Complete sequence of chromosome of Shewanella baltica OS223.</title>
        <authorList>
            <consortium name="US DOE Joint Genome Institute"/>
            <person name="Lucas S."/>
            <person name="Copeland A."/>
            <person name="Lapidus A."/>
            <person name="Glavina del Rio T."/>
            <person name="Dalin E."/>
            <person name="Tice H."/>
            <person name="Bruce D."/>
            <person name="Goodwin L."/>
            <person name="Pitluck S."/>
            <person name="Chertkov O."/>
            <person name="Meincke L."/>
            <person name="Brettin T."/>
            <person name="Detter J.C."/>
            <person name="Han C."/>
            <person name="Kuske C.R."/>
            <person name="Larimer F."/>
            <person name="Land M."/>
            <person name="Hauser L."/>
            <person name="Kyrpides N."/>
            <person name="Ovchinnikova G."/>
            <person name="Brettar I."/>
            <person name="Rodrigues J."/>
            <person name="Konstantinidis K."/>
            <person name="Tiedje J."/>
        </authorList>
    </citation>
    <scope>NUCLEOTIDE SEQUENCE [LARGE SCALE GENOMIC DNA]</scope>
    <source>
        <strain>OS223</strain>
    </source>
</reference>